<reference key="1">
    <citation type="journal article" date="2008" name="PLoS Genet.">
        <title>Genomic islands in the pathogenic filamentous fungus Aspergillus fumigatus.</title>
        <authorList>
            <person name="Fedorova N.D."/>
            <person name="Khaldi N."/>
            <person name="Joardar V.S."/>
            <person name="Maiti R."/>
            <person name="Amedeo P."/>
            <person name="Anderson M.J."/>
            <person name="Crabtree J."/>
            <person name="Silva J.C."/>
            <person name="Badger J.H."/>
            <person name="Albarraq A."/>
            <person name="Angiuoli S."/>
            <person name="Bussey H."/>
            <person name="Bowyer P."/>
            <person name="Cotty P.J."/>
            <person name="Dyer P.S."/>
            <person name="Egan A."/>
            <person name="Galens K."/>
            <person name="Fraser-Liggett C.M."/>
            <person name="Haas B.J."/>
            <person name="Inman J.M."/>
            <person name="Kent R."/>
            <person name="Lemieux S."/>
            <person name="Malavazi I."/>
            <person name="Orvis J."/>
            <person name="Roemer T."/>
            <person name="Ronning C.M."/>
            <person name="Sundaram J.P."/>
            <person name="Sutton G."/>
            <person name="Turner G."/>
            <person name="Venter J.C."/>
            <person name="White O.R."/>
            <person name="Whitty B.R."/>
            <person name="Youngman P."/>
            <person name="Wolfe K.H."/>
            <person name="Goldman G.H."/>
            <person name="Wortman J.R."/>
            <person name="Jiang B."/>
            <person name="Denning D.W."/>
            <person name="Nierman W.C."/>
        </authorList>
    </citation>
    <scope>NUCLEOTIDE SEQUENCE [LARGE SCALE GENOMIC DNA]</scope>
    <source>
        <strain>ATCC 1007 / CBS 513.65 / DSM 816 / NCTC 3887 / NRRL 1 / QM 1276 / 107</strain>
    </source>
</reference>
<dbReference type="EMBL" id="DS027052">
    <property type="protein sequence ID" value="EAW11177.1"/>
    <property type="molecule type" value="Genomic_DNA"/>
</dbReference>
<dbReference type="RefSeq" id="XP_001272603.1">
    <property type="nucleotide sequence ID" value="XM_001272602.1"/>
</dbReference>
<dbReference type="SMR" id="A1CE78"/>
<dbReference type="STRING" id="344612.A1CE78"/>
<dbReference type="EnsemblFungi" id="EAW11177">
    <property type="protein sequence ID" value="EAW11177"/>
    <property type="gene ID" value="ACLA_088660"/>
</dbReference>
<dbReference type="GeneID" id="4705009"/>
<dbReference type="KEGG" id="act:ACLA_088660"/>
<dbReference type="VEuPathDB" id="FungiDB:ACLA_088660"/>
<dbReference type="eggNOG" id="ENOG502R9PE">
    <property type="taxonomic scope" value="Eukaryota"/>
</dbReference>
<dbReference type="HOGENOM" id="CLU_033828_0_0_1"/>
<dbReference type="OMA" id="AMPEAHR"/>
<dbReference type="OrthoDB" id="75754at2759"/>
<dbReference type="Proteomes" id="UP000006701">
    <property type="component" value="Unassembled WGS sequence"/>
</dbReference>
<dbReference type="GO" id="GO:0005694">
    <property type="term" value="C:chromosome"/>
    <property type="evidence" value="ECO:0007669"/>
    <property type="project" value="UniProtKB-SubCell"/>
</dbReference>
<dbReference type="GO" id="GO:0005634">
    <property type="term" value="C:nucleus"/>
    <property type="evidence" value="ECO:0007669"/>
    <property type="project" value="UniProtKB-SubCell"/>
</dbReference>
<dbReference type="GO" id="GO:0003677">
    <property type="term" value="F:DNA binding"/>
    <property type="evidence" value="ECO:0007669"/>
    <property type="project" value="UniProtKB-KW"/>
</dbReference>
<dbReference type="GO" id="GO:0042393">
    <property type="term" value="F:histone binding"/>
    <property type="evidence" value="ECO:0007669"/>
    <property type="project" value="TreeGrafter"/>
</dbReference>
<dbReference type="GO" id="GO:0031491">
    <property type="term" value="F:nucleosome binding"/>
    <property type="evidence" value="ECO:0007669"/>
    <property type="project" value="TreeGrafter"/>
</dbReference>
<dbReference type="Gene3D" id="2.30.29.120">
    <property type="match status" value="1"/>
</dbReference>
<dbReference type="Gene3D" id="2.30.29.30">
    <property type="entry name" value="Pleckstrin-homology domain (PH domain)/Phosphotyrosine-binding domain (PTB)"/>
    <property type="match status" value="1"/>
</dbReference>
<dbReference type="InterPro" id="IPR011993">
    <property type="entry name" value="PH-like_dom_sf"/>
</dbReference>
<dbReference type="InterPro" id="IPR013719">
    <property type="entry name" value="RTT106/SPT16-like_middle_dom"/>
</dbReference>
<dbReference type="InterPro" id="IPR050454">
    <property type="entry name" value="RTT106/SSRP1_HistChap/FACT"/>
</dbReference>
<dbReference type="PANTHER" id="PTHR45849">
    <property type="entry name" value="FACT COMPLEX SUBUNIT SSRP1"/>
    <property type="match status" value="1"/>
</dbReference>
<dbReference type="PANTHER" id="PTHR45849:SF3">
    <property type="entry name" value="HISTONE CHAPERONE RTT106"/>
    <property type="match status" value="1"/>
</dbReference>
<dbReference type="Pfam" id="PF08512">
    <property type="entry name" value="Rttp106-like_middle"/>
    <property type="match status" value="1"/>
</dbReference>
<dbReference type="SMART" id="SM01287">
    <property type="entry name" value="Rtt106"/>
    <property type="match status" value="1"/>
</dbReference>
<dbReference type="SUPFAM" id="SSF50729">
    <property type="entry name" value="PH domain-like"/>
    <property type="match status" value="1"/>
</dbReference>
<feature type="chain" id="PRO_0000320482" description="Histone chaperone rtt106">
    <location>
        <begin position="1"/>
        <end position="463"/>
    </location>
</feature>
<feature type="region of interest" description="Disordered" evidence="2">
    <location>
        <begin position="60"/>
        <end position="97"/>
    </location>
</feature>
<feature type="region of interest" description="Disordered" evidence="2">
    <location>
        <begin position="368"/>
        <end position="463"/>
    </location>
</feature>
<feature type="compositionally biased region" description="Polar residues" evidence="2">
    <location>
        <begin position="85"/>
        <end position="95"/>
    </location>
</feature>
<feature type="compositionally biased region" description="Acidic residues" evidence="2">
    <location>
        <begin position="399"/>
        <end position="417"/>
    </location>
</feature>
<feature type="compositionally biased region" description="Acidic residues" evidence="2">
    <location>
        <begin position="424"/>
        <end position="463"/>
    </location>
</feature>
<accession>A1CE78</accession>
<sequence>MVFATINRSATKTVPATIPAIEEAFAAEPSLKKRVYDAIENTPQYVPLFEDIARYTSSLLARPTNPPAQPAEASEGPAAKKRKLQNGTAAANAQSPADVKAETSLQFYMQDVSFAMPQRKKLTLEITAGRGFLRARNQTSKEVEFGVPMDRIRHVLCLPVPEKAQRQFNFCVIPQYSDGINPPTEGEEVFESMVWTISDGPAKAAFSGTGQQIGNKEGETAESLVRRILNENLSHIKVVRPDEREFVSAMPEAHRKGEKAYHVKAFRGSKEGYLFFLSTGVFFGFKKPLVFFAFENIVSISYTSVLQRTFNLNIAVRSHNGAEDETQEFELSMIDQADYAGIDAYIKKHGLQDASLAEARRAKRYNINGAKAEEDTTNNAEGAAAEEESELQKAQRELEDQEDEDEEDYDPGSDGESEGSGSSSEDDDEDDEDDEEDDDNEGDEDLVAAELGSEAEDVPQDEL</sequence>
<proteinExistence type="inferred from homology"/>
<keyword id="KW-0143">Chaperone</keyword>
<keyword id="KW-0158">Chromosome</keyword>
<keyword id="KW-0238">DNA-binding</keyword>
<keyword id="KW-0539">Nucleus</keyword>
<keyword id="KW-1185">Reference proteome</keyword>
<keyword id="KW-0804">Transcription</keyword>
<keyword id="KW-0805">Transcription regulation</keyword>
<organism>
    <name type="scientific">Aspergillus clavatus (strain ATCC 1007 / CBS 513.65 / DSM 816 / NCTC 3887 / NRRL 1 / QM 1276 / 107)</name>
    <dbReference type="NCBI Taxonomy" id="344612"/>
    <lineage>
        <taxon>Eukaryota</taxon>
        <taxon>Fungi</taxon>
        <taxon>Dikarya</taxon>
        <taxon>Ascomycota</taxon>
        <taxon>Pezizomycotina</taxon>
        <taxon>Eurotiomycetes</taxon>
        <taxon>Eurotiomycetidae</taxon>
        <taxon>Eurotiales</taxon>
        <taxon>Aspergillaceae</taxon>
        <taxon>Aspergillus</taxon>
        <taxon>Aspergillus subgen. Fumigati</taxon>
    </lineage>
</organism>
<evidence type="ECO:0000250" key="1"/>
<evidence type="ECO:0000256" key="2">
    <source>
        <dbReference type="SAM" id="MobiDB-lite"/>
    </source>
</evidence>
<evidence type="ECO:0000305" key="3"/>
<gene>
    <name type="primary">rtt106</name>
    <name type="ORF">ACLA_088660</name>
</gene>
<comment type="function">
    <text evidence="1">Histones H3 and H4 chaperone involved in the nucleosome formation and heterochromatin silencing. Required for the deposition of H3K56ac-carrying H3-H4 complex onto newly-replicated DNA. Plays a role in the transcriptional regulation of the cell-cycle dependent histone genes by creating a repressive structure at the core histone gene promoter (By similarity).</text>
</comment>
<comment type="subunit">
    <text evidence="1">Interacts with histones H3 and H4.</text>
</comment>
<comment type="subcellular location">
    <subcellularLocation>
        <location evidence="1">Nucleus</location>
    </subcellularLocation>
    <subcellularLocation>
        <location evidence="1">Chromosome</location>
    </subcellularLocation>
</comment>
<comment type="similarity">
    <text evidence="3">Belongs to the RTT106 family.</text>
</comment>
<name>RT106_ASPCL</name>
<protein>
    <recommendedName>
        <fullName>Histone chaperone rtt106</fullName>
    </recommendedName>
</protein>